<comment type="function">
    <text evidence="2">Catalyzes the reversible oxidation of malate to oxaloacetate.</text>
</comment>
<comment type="catalytic activity">
    <reaction evidence="2">
        <text>(S)-malate + NAD(+) = oxaloacetate + NADH + H(+)</text>
        <dbReference type="Rhea" id="RHEA:21432"/>
        <dbReference type="ChEBI" id="CHEBI:15378"/>
        <dbReference type="ChEBI" id="CHEBI:15589"/>
        <dbReference type="ChEBI" id="CHEBI:16452"/>
        <dbReference type="ChEBI" id="CHEBI:57540"/>
        <dbReference type="ChEBI" id="CHEBI:57945"/>
        <dbReference type="EC" id="1.1.1.37"/>
    </reaction>
</comment>
<comment type="similarity">
    <text evidence="2">Belongs to the LDH/MDH superfamily. MDH type 2 family.</text>
</comment>
<keyword id="KW-0520">NAD</keyword>
<keyword id="KW-0560">Oxidoreductase</keyword>
<keyword id="KW-1185">Reference proteome</keyword>
<keyword id="KW-0816">Tricarboxylic acid cycle</keyword>
<proteinExistence type="inferred from homology"/>
<feature type="initiator methionine" description="Removed" evidence="1">
    <location>
        <position position="1"/>
    </location>
</feature>
<feature type="chain" id="PRO_0000294398" description="Malate dehydrogenase">
    <location>
        <begin position="2"/>
        <end position="328"/>
    </location>
</feature>
<feature type="active site" description="Proton acceptor" evidence="2">
    <location>
        <position position="190"/>
    </location>
</feature>
<feature type="binding site" evidence="2">
    <location>
        <begin position="12"/>
        <end position="18"/>
    </location>
    <ligand>
        <name>NAD(+)</name>
        <dbReference type="ChEBI" id="CHEBI:57540"/>
    </ligand>
</feature>
<feature type="binding site" evidence="2">
    <location>
        <position position="95"/>
    </location>
    <ligand>
        <name>substrate</name>
    </ligand>
</feature>
<feature type="binding site" evidence="2">
    <location>
        <position position="101"/>
    </location>
    <ligand>
        <name>substrate</name>
    </ligand>
</feature>
<feature type="binding site" evidence="2">
    <location>
        <position position="108"/>
    </location>
    <ligand>
        <name>NAD(+)</name>
        <dbReference type="ChEBI" id="CHEBI:57540"/>
    </ligand>
</feature>
<feature type="binding site" evidence="2">
    <location>
        <position position="115"/>
    </location>
    <ligand>
        <name>NAD(+)</name>
        <dbReference type="ChEBI" id="CHEBI:57540"/>
    </ligand>
</feature>
<feature type="binding site" evidence="2">
    <location>
        <begin position="132"/>
        <end position="134"/>
    </location>
    <ligand>
        <name>NAD(+)</name>
        <dbReference type="ChEBI" id="CHEBI:57540"/>
    </ligand>
</feature>
<feature type="binding site" evidence="2">
    <location>
        <position position="134"/>
    </location>
    <ligand>
        <name>substrate</name>
    </ligand>
</feature>
<feature type="binding site" evidence="2">
    <location>
        <position position="165"/>
    </location>
    <ligand>
        <name>substrate</name>
    </ligand>
</feature>
<accession>A1VRQ1</accession>
<evidence type="ECO:0000250" key="1"/>
<evidence type="ECO:0000255" key="2">
    <source>
        <dbReference type="HAMAP-Rule" id="MF_01517"/>
    </source>
</evidence>
<name>MDH_POLNA</name>
<dbReference type="EC" id="1.1.1.37" evidence="2"/>
<dbReference type="EMBL" id="CP000529">
    <property type="protein sequence ID" value="ABM38329.1"/>
    <property type="molecule type" value="Genomic_DNA"/>
</dbReference>
<dbReference type="RefSeq" id="WP_011802401.1">
    <property type="nucleotide sequence ID" value="NC_008781.1"/>
</dbReference>
<dbReference type="SMR" id="A1VRQ1"/>
<dbReference type="STRING" id="365044.Pnap_3030"/>
<dbReference type="KEGG" id="pna:Pnap_3030"/>
<dbReference type="eggNOG" id="COG0039">
    <property type="taxonomic scope" value="Bacteria"/>
</dbReference>
<dbReference type="HOGENOM" id="CLU_040727_2_0_4"/>
<dbReference type="OrthoDB" id="9802969at2"/>
<dbReference type="Proteomes" id="UP000000644">
    <property type="component" value="Chromosome"/>
</dbReference>
<dbReference type="GO" id="GO:0030060">
    <property type="term" value="F:L-malate dehydrogenase (NAD+) activity"/>
    <property type="evidence" value="ECO:0007669"/>
    <property type="project" value="UniProtKB-UniRule"/>
</dbReference>
<dbReference type="GO" id="GO:0006108">
    <property type="term" value="P:malate metabolic process"/>
    <property type="evidence" value="ECO:0007669"/>
    <property type="project" value="InterPro"/>
</dbReference>
<dbReference type="GO" id="GO:0006099">
    <property type="term" value="P:tricarboxylic acid cycle"/>
    <property type="evidence" value="ECO:0007669"/>
    <property type="project" value="UniProtKB-UniRule"/>
</dbReference>
<dbReference type="CDD" id="cd01338">
    <property type="entry name" value="MDH_chloroplast-like"/>
    <property type="match status" value="1"/>
</dbReference>
<dbReference type="FunFam" id="3.40.50.720:FF:000010">
    <property type="entry name" value="Malate dehydrogenase"/>
    <property type="match status" value="1"/>
</dbReference>
<dbReference type="FunFam" id="3.90.110.10:FF:000002">
    <property type="entry name" value="Malate dehydrogenase"/>
    <property type="match status" value="1"/>
</dbReference>
<dbReference type="Gene3D" id="3.90.110.10">
    <property type="entry name" value="Lactate dehydrogenase/glycoside hydrolase, family 4, C-terminal"/>
    <property type="match status" value="1"/>
</dbReference>
<dbReference type="Gene3D" id="3.40.50.720">
    <property type="entry name" value="NAD(P)-binding Rossmann-like Domain"/>
    <property type="match status" value="1"/>
</dbReference>
<dbReference type="HAMAP" id="MF_01517">
    <property type="entry name" value="Malate_dehydrog_2"/>
    <property type="match status" value="1"/>
</dbReference>
<dbReference type="InterPro" id="IPR001557">
    <property type="entry name" value="L-lactate/malate_DH"/>
</dbReference>
<dbReference type="InterPro" id="IPR022383">
    <property type="entry name" value="Lactate/malate_DH_C"/>
</dbReference>
<dbReference type="InterPro" id="IPR001236">
    <property type="entry name" value="Lactate/malate_DH_N"/>
</dbReference>
<dbReference type="InterPro" id="IPR015955">
    <property type="entry name" value="Lactate_DH/Glyco_Ohase_4_C"/>
</dbReference>
<dbReference type="InterPro" id="IPR010945">
    <property type="entry name" value="Malate_DH_type2"/>
</dbReference>
<dbReference type="InterPro" id="IPR036291">
    <property type="entry name" value="NAD(P)-bd_dom_sf"/>
</dbReference>
<dbReference type="NCBIfam" id="TIGR01759">
    <property type="entry name" value="MalateDH-SF1"/>
    <property type="match status" value="1"/>
</dbReference>
<dbReference type="NCBIfam" id="NF003916">
    <property type="entry name" value="PRK05442.1"/>
    <property type="match status" value="1"/>
</dbReference>
<dbReference type="PANTHER" id="PTHR23382">
    <property type="entry name" value="MALATE DEHYDROGENASE"/>
    <property type="match status" value="1"/>
</dbReference>
<dbReference type="Pfam" id="PF02866">
    <property type="entry name" value="Ldh_1_C"/>
    <property type="match status" value="1"/>
</dbReference>
<dbReference type="Pfam" id="PF00056">
    <property type="entry name" value="Ldh_1_N"/>
    <property type="match status" value="1"/>
</dbReference>
<dbReference type="PIRSF" id="PIRSF000102">
    <property type="entry name" value="Lac_mal_DH"/>
    <property type="match status" value="1"/>
</dbReference>
<dbReference type="SUPFAM" id="SSF56327">
    <property type="entry name" value="LDH C-terminal domain-like"/>
    <property type="match status" value="1"/>
</dbReference>
<dbReference type="SUPFAM" id="SSF51735">
    <property type="entry name" value="NAD(P)-binding Rossmann-fold domains"/>
    <property type="match status" value="1"/>
</dbReference>
<gene>
    <name evidence="2" type="primary">mdh</name>
    <name type="ordered locus">Pnap_3030</name>
</gene>
<sequence length="328" mass="34846">MSKKPVRVAVTGAAGQIGYALLFRIASGEMLGKDQPVILQLLEVPVEGPQKALKGVMMELDDCAFPLLVEMTAHSDPMTAFKDADYALLVGSRPRGPGMERAELLAVNGAIFTAQGKALNAVASRDVRVLVVGNPANTNAYIAMKSAPDLPAKNFTAMLRLDHNRAASQIAAKTGKAVADIEKLTVWGNHSPTMYADYRFATIGGESVAQMINDQEWNANVFLPTVGKRGAAIIEARGSSSAASAANAAIDHMRDWALGTNGKWVTMGIPSGGEYGIPAETMFGFPVTCENGEYKIVEGLEIDAFSQERINITLAELEGEKAGVAHLL</sequence>
<organism>
    <name type="scientific">Polaromonas naphthalenivorans (strain CJ2)</name>
    <dbReference type="NCBI Taxonomy" id="365044"/>
    <lineage>
        <taxon>Bacteria</taxon>
        <taxon>Pseudomonadati</taxon>
        <taxon>Pseudomonadota</taxon>
        <taxon>Betaproteobacteria</taxon>
        <taxon>Burkholderiales</taxon>
        <taxon>Comamonadaceae</taxon>
        <taxon>Polaromonas</taxon>
    </lineage>
</organism>
<protein>
    <recommendedName>
        <fullName evidence="2">Malate dehydrogenase</fullName>
        <ecNumber evidence="2">1.1.1.37</ecNumber>
    </recommendedName>
</protein>
<reference key="1">
    <citation type="journal article" date="2009" name="Environ. Microbiol.">
        <title>The genome of Polaromonas naphthalenivorans strain CJ2, isolated from coal tar-contaminated sediment, reveals physiological and metabolic versatility and evolution through extensive horizontal gene transfer.</title>
        <authorList>
            <person name="Yagi J.M."/>
            <person name="Sims D."/>
            <person name="Brettin T."/>
            <person name="Bruce D."/>
            <person name="Madsen E.L."/>
        </authorList>
    </citation>
    <scope>NUCLEOTIDE SEQUENCE [LARGE SCALE GENOMIC DNA]</scope>
    <source>
        <strain>CJ2</strain>
    </source>
</reference>